<accession>Q4GZK4</accession>
<name>ORR7_ORYSI</name>
<gene>
    <name evidence="7" type="primary">RR7</name>
</gene>
<comment type="function">
    <text evidence="1">Functions as a response regulator involved in His-to-Asp phosphorelay signal transduction system. Phosphorylation of the Asp residue in the receiver domain activates the ability of the protein to promote the transcription of target genes. Type-A response regulators seem to act as negative regulators of the cytokinin signaling.</text>
</comment>
<comment type="tissue specificity">
    <text evidence="4">Expressed in flowers, and at low levels in roots, mature leaves and shoots.</text>
</comment>
<comment type="induction">
    <text evidence="4">By cytokinin.</text>
</comment>
<comment type="PTM">
    <text evidence="6">Two-component system major event consists of a His-to-Asp phosphorelay between a sensor histidine kinase (HK) and a response regulator (RR). In plants, the His-to-Asp phosphorelay involves an additional intermediate named Histidine-containing phosphotransfer protein (HPt). This multistep phosphorelay consists of a His-Asp-His-Asp sequential transfer of a phosphate group between first a His and an Asp of the HK protein, followed by the transfer to a conserved His of the HPt protein and finally the transfer to an Asp in the receiver domain of the RR protein.</text>
</comment>
<comment type="similarity">
    <text evidence="6">Belongs to the ARR family. Type-A subfamily.</text>
</comment>
<evidence type="ECO:0000250" key="1">
    <source>
        <dbReference type="UniProtKB" id="Q9ZWS9"/>
    </source>
</evidence>
<evidence type="ECO:0000255" key="2">
    <source>
        <dbReference type="PROSITE-ProRule" id="PRU00169"/>
    </source>
</evidence>
<evidence type="ECO:0000256" key="3">
    <source>
        <dbReference type="SAM" id="MobiDB-lite"/>
    </source>
</evidence>
<evidence type="ECO:0000269" key="4">
    <source>
    </source>
</evidence>
<evidence type="ECO:0000303" key="5">
    <source>
    </source>
</evidence>
<evidence type="ECO:0000305" key="6"/>
<evidence type="ECO:0000312" key="7">
    <source>
        <dbReference type="EMBL" id="CAI79411.1"/>
    </source>
</evidence>
<sequence>MRVPAAVTGGCGCGVDGGGGCCRGGGKLADWEEGKDDEMKSVVVKGWTRMAQVVPLHDNASAEDDDDDEEDDDEDDDDDDDEDDEEEAAPPYVMAVDDSSVDRAVITALLRRSKYRDSGKRALEILGSEPNVSMIITDYWMPEMTGYDLLKKIKESSELKQIPVVIMSSENVPTRISRCLEEGAEDFLLKPVRPADISRITSRMLQ</sequence>
<dbReference type="EMBL" id="AJ938076">
    <property type="protein sequence ID" value="CAI79411.1"/>
    <property type="molecule type" value="mRNA"/>
</dbReference>
<dbReference type="SMR" id="Q4GZK4"/>
<dbReference type="GO" id="GO:0009736">
    <property type="term" value="P:cytokinin-activated signaling pathway"/>
    <property type="evidence" value="ECO:0007669"/>
    <property type="project" value="UniProtKB-KW"/>
</dbReference>
<dbReference type="GO" id="GO:0000160">
    <property type="term" value="P:phosphorelay signal transduction system"/>
    <property type="evidence" value="ECO:0007669"/>
    <property type="project" value="UniProtKB-KW"/>
</dbReference>
<dbReference type="GO" id="GO:0009735">
    <property type="term" value="P:response to cytokinin"/>
    <property type="evidence" value="ECO:0000305"/>
    <property type="project" value="Gramene"/>
</dbReference>
<dbReference type="CDD" id="cd17581">
    <property type="entry name" value="REC_typeA_ARR"/>
    <property type="match status" value="1"/>
</dbReference>
<dbReference type="Gene3D" id="3.40.50.2300">
    <property type="match status" value="1"/>
</dbReference>
<dbReference type="InterPro" id="IPR045279">
    <property type="entry name" value="ARR-like"/>
</dbReference>
<dbReference type="InterPro" id="IPR011006">
    <property type="entry name" value="CheY-like_superfamily"/>
</dbReference>
<dbReference type="InterPro" id="IPR001789">
    <property type="entry name" value="Sig_transdc_resp-reg_receiver"/>
</dbReference>
<dbReference type="PANTHER" id="PTHR43874">
    <property type="entry name" value="TWO-COMPONENT RESPONSE REGULATOR"/>
    <property type="match status" value="1"/>
</dbReference>
<dbReference type="PANTHER" id="PTHR43874:SF18">
    <property type="entry name" value="TWO-COMPONENT RESPONSE REGULATOR ORR7"/>
    <property type="match status" value="1"/>
</dbReference>
<dbReference type="Pfam" id="PF00072">
    <property type="entry name" value="Response_reg"/>
    <property type="match status" value="1"/>
</dbReference>
<dbReference type="SMART" id="SM00448">
    <property type="entry name" value="REC"/>
    <property type="match status" value="1"/>
</dbReference>
<dbReference type="SUPFAM" id="SSF52172">
    <property type="entry name" value="CheY-like"/>
    <property type="match status" value="1"/>
</dbReference>
<dbReference type="PROSITE" id="PS50110">
    <property type="entry name" value="RESPONSE_REGULATORY"/>
    <property type="match status" value="1"/>
</dbReference>
<feature type="chain" id="PRO_0000433829" description="Two-component response regulator ORR7">
    <location>
        <begin position="1"/>
        <end position="206"/>
    </location>
</feature>
<feature type="domain" description="Response regulatory" evidence="2">
    <location>
        <begin position="92"/>
        <end position="205"/>
    </location>
</feature>
<feature type="region of interest" description="Disordered" evidence="3">
    <location>
        <begin position="53"/>
        <end position="92"/>
    </location>
</feature>
<feature type="compositionally biased region" description="Acidic residues" evidence="3">
    <location>
        <begin position="61"/>
        <end position="88"/>
    </location>
</feature>
<feature type="modified residue" description="4-aspartylphosphate" evidence="2">
    <location>
        <position position="138"/>
    </location>
</feature>
<keyword id="KW-0932">Cytokinin signaling pathway</keyword>
<keyword id="KW-0597">Phosphoprotein</keyword>
<keyword id="KW-0804">Transcription</keyword>
<keyword id="KW-0805">Transcription regulation</keyword>
<keyword id="KW-0902">Two-component regulatory system</keyword>
<proteinExistence type="evidence at transcript level"/>
<reference key="1">
    <citation type="journal article" date="2006" name="BMC Plant Biol.">
        <title>Molecular characterization and differential expression of cytokinin-responsive type-A response regulators in rice (Oryza sativa).</title>
        <authorList>
            <person name="Jain M."/>
            <person name="Tyagi A.K."/>
            <person name="Khurana J.P."/>
        </authorList>
    </citation>
    <scope>NUCLEOTIDE SEQUENCE [MRNA]</scope>
    <scope>TISSUE SPECIFICITY</scope>
    <scope>INDUCTION</scope>
    <source>
        <strain>cv. Pusa Basmati</strain>
    </source>
</reference>
<protein>
    <recommendedName>
        <fullName evidence="6">Two-component response regulator ORR7</fullName>
    </recommendedName>
    <alternativeName>
        <fullName evidence="5">Type A response regulator 7</fullName>
        <shortName evidence="5">OsRR7</shortName>
    </alternativeName>
</protein>
<organism>
    <name type="scientific">Oryza sativa subsp. indica</name>
    <name type="common">Rice</name>
    <dbReference type="NCBI Taxonomy" id="39946"/>
    <lineage>
        <taxon>Eukaryota</taxon>
        <taxon>Viridiplantae</taxon>
        <taxon>Streptophyta</taxon>
        <taxon>Embryophyta</taxon>
        <taxon>Tracheophyta</taxon>
        <taxon>Spermatophyta</taxon>
        <taxon>Magnoliopsida</taxon>
        <taxon>Liliopsida</taxon>
        <taxon>Poales</taxon>
        <taxon>Poaceae</taxon>
        <taxon>BOP clade</taxon>
        <taxon>Oryzoideae</taxon>
        <taxon>Oryzeae</taxon>
        <taxon>Oryzinae</taxon>
        <taxon>Oryza</taxon>
        <taxon>Oryza sativa</taxon>
    </lineage>
</organism>